<accession>O29557</accession>
<keyword id="KW-1185">Reference proteome</keyword>
<protein>
    <recommendedName>
        <fullName>Uncharacterized protein AF_0701</fullName>
    </recommendedName>
</protein>
<feature type="chain" id="PRO_0000127911" description="Uncharacterized protein AF_0701">
    <location>
        <begin position="1"/>
        <end position="270"/>
    </location>
</feature>
<dbReference type="EMBL" id="AE000782">
    <property type="protein sequence ID" value="AAB90545.1"/>
    <property type="molecule type" value="Genomic_DNA"/>
</dbReference>
<dbReference type="PIR" id="E69337">
    <property type="entry name" value="E69337"/>
</dbReference>
<dbReference type="SMR" id="O29557"/>
<dbReference type="STRING" id="224325.AF_0701"/>
<dbReference type="PaxDb" id="224325-AF_0701"/>
<dbReference type="EnsemblBacteria" id="AAB90545">
    <property type="protein sequence ID" value="AAB90545"/>
    <property type="gene ID" value="AF_0701"/>
</dbReference>
<dbReference type="KEGG" id="afu:AF_0701"/>
<dbReference type="eggNOG" id="arCOG06116">
    <property type="taxonomic scope" value="Archaea"/>
</dbReference>
<dbReference type="HOGENOM" id="CLU_073077_0_0_2"/>
<dbReference type="Proteomes" id="UP000002199">
    <property type="component" value="Chromosome"/>
</dbReference>
<proteinExistence type="predicted"/>
<sequence length="270" mass="32269">MRVVYTSPRIENLQFLKSEFSNYSVIVLEEPKNDLFHDVLEGKITVDLYVRKISTQFPLYTRKLIEMLKELKSREIMQVEPYLEEVERLKNFSEGDERVREMEKRVNALYIDYTESFLKSDFDEIVEKVLRFSEAEAERIMLRDEMRAKALDDLDEAVIEAGMNHIKLAEILDAESVRIPEIIAERLGTRYLENPGEKLLKAFIFEEDDDLRLLAARNLIFTSLLEKREMEPDFDGDYPHFTHEQKLVRFVDKLDYEKCRKLFYRFWSPR</sequence>
<reference key="1">
    <citation type="journal article" date="1997" name="Nature">
        <title>The complete genome sequence of the hyperthermophilic, sulphate-reducing archaeon Archaeoglobus fulgidus.</title>
        <authorList>
            <person name="Klenk H.-P."/>
            <person name="Clayton R.A."/>
            <person name="Tomb J.-F."/>
            <person name="White O."/>
            <person name="Nelson K.E."/>
            <person name="Ketchum K.A."/>
            <person name="Dodson R.J."/>
            <person name="Gwinn M.L."/>
            <person name="Hickey E.K."/>
            <person name="Peterson J.D."/>
            <person name="Richardson D.L."/>
            <person name="Kerlavage A.R."/>
            <person name="Graham D.E."/>
            <person name="Kyrpides N.C."/>
            <person name="Fleischmann R.D."/>
            <person name="Quackenbush J."/>
            <person name="Lee N.H."/>
            <person name="Sutton G.G."/>
            <person name="Gill S.R."/>
            <person name="Kirkness E.F."/>
            <person name="Dougherty B.A."/>
            <person name="McKenney K."/>
            <person name="Adams M.D."/>
            <person name="Loftus B.J."/>
            <person name="Peterson S.N."/>
            <person name="Reich C.I."/>
            <person name="McNeil L.K."/>
            <person name="Badger J.H."/>
            <person name="Glodek A."/>
            <person name="Zhou L."/>
            <person name="Overbeek R."/>
            <person name="Gocayne J.D."/>
            <person name="Weidman J.F."/>
            <person name="McDonald L.A."/>
            <person name="Utterback T.R."/>
            <person name="Cotton M.D."/>
            <person name="Spriggs T."/>
            <person name="Artiach P."/>
            <person name="Kaine B.P."/>
            <person name="Sykes S.M."/>
            <person name="Sadow P.W."/>
            <person name="D'Andrea K.P."/>
            <person name="Bowman C."/>
            <person name="Fujii C."/>
            <person name="Garland S.A."/>
            <person name="Mason T.M."/>
            <person name="Olsen G.J."/>
            <person name="Fraser C.M."/>
            <person name="Smith H.O."/>
            <person name="Woese C.R."/>
            <person name="Venter J.C."/>
        </authorList>
    </citation>
    <scope>NUCLEOTIDE SEQUENCE [LARGE SCALE GENOMIC DNA]</scope>
    <source>
        <strain>ATCC 49558 / DSM 4304 / JCM 9628 / NBRC 100126 / VC-16</strain>
    </source>
</reference>
<organism>
    <name type="scientific">Archaeoglobus fulgidus (strain ATCC 49558 / DSM 4304 / JCM 9628 / NBRC 100126 / VC-16)</name>
    <dbReference type="NCBI Taxonomy" id="224325"/>
    <lineage>
        <taxon>Archaea</taxon>
        <taxon>Methanobacteriati</taxon>
        <taxon>Methanobacteriota</taxon>
        <taxon>Archaeoglobi</taxon>
        <taxon>Archaeoglobales</taxon>
        <taxon>Archaeoglobaceae</taxon>
        <taxon>Archaeoglobus</taxon>
    </lineage>
</organism>
<name>Y701_ARCFU</name>
<gene>
    <name type="ordered locus">AF_0701</name>
</gene>